<protein>
    <recommendedName>
        <fullName evidence="3">Conotoxin tx3i</fullName>
    </recommendedName>
</protein>
<name>M3I_CONTE</name>
<proteinExistence type="evidence at protein level"/>
<reference key="1">
    <citation type="journal article" date="2012" name="J. Proteome Res.">
        <title>Constrained de novo sequencing of conotoxins.</title>
        <authorList>
            <person name="Bhatia S."/>
            <person name="Kil Y.J."/>
            <person name="Ueberheide B."/>
            <person name="Chait B.T."/>
            <person name="Tayo L."/>
            <person name="Cruz L."/>
            <person name="Lu B."/>
            <person name="Yates J.R. III"/>
            <person name="Bern M."/>
        </authorList>
    </citation>
    <scope>PROTEIN SEQUENCE</scope>
    <scope>IDENTIFICATION BY MASS SPECTROMETRY</scope>
    <scope>SUBCELLULAR LOCATION</scope>
    <scope>HYDROXYLATION AT PRO-4</scope>
    <scope>HYDROXYLATION AT PRO-13</scope>
    <scope>AMIDATION AT CYS-15</scope>
    <source>
        <tissue>Venom</tissue>
    </source>
</reference>
<accession>P0DPL2</accession>
<keyword id="KW-0027">Amidation</keyword>
<keyword id="KW-0903">Direct protein sequencing</keyword>
<keyword id="KW-1015">Disulfide bond</keyword>
<keyword id="KW-0379">Hydroxylation</keyword>
<keyword id="KW-0964">Secreted</keyword>
<keyword id="KW-0800">Toxin</keyword>
<sequence length="15" mass="1430">CCGPTACIAGCKPCC</sequence>
<comment type="subcellular location">
    <subcellularLocation>
        <location evidence="2">Secreted</location>
    </subcellularLocation>
</comment>
<comment type="tissue specificity">
    <text evidence="4">Expressed by the venom duct.</text>
</comment>
<comment type="domain">
    <text evidence="3">The cysteine framework is III (CC-C-C-CC). Classified in the M-2 branch, since 2 residues stand between the fourth and the fifth cysteine residues.</text>
</comment>
<comment type="similarity">
    <text evidence="3">Belongs to the conotoxin M superfamily.</text>
</comment>
<dbReference type="GO" id="GO:0005576">
    <property type="term" value="C:extracellular region"/>
    <property type="evidence" value="ECO:0007669"/>
    <property type="project" value="UniProtKB-SubCell"/>
</dbReference>
<dbReference type="GO" id="GO:0090729">
    <property type="term" value="F:toxin activity"/>
    <property type="evidence" value="ECO:0007669"/>
    <property type="project" value="UniProtKB-KW"/>
</dbReference>
<evidence type="ECO:0000250" key="1">
    <source>
        <dbReference type="UniProtKB" id="P0CI24"/>
    </source>
</evidence>
<evidence type="ECO:0000269" key="2">
    <source>
    </source>
</evidence>
<evidence type="ECO:0000305" key="3"/>
<evidence type="ECO:0000305" key="4">
    <source>
    </source>
</evidence>
<feature type="peptide" id="PRO_0000445048" description="Conotoxin tx3i" evidence="2">
    <location>
        <begin position="1"/>
        <end position="15"/>
    </location>
</feature>
<feature type="modified residue" description="4-hydroxyproline" evidence="2">
    <location>
        <position position="4"/>
    </location>
</feature>
<feature type="modified residue" description="4-hydroxyproline; partial" evidence="2">
    <location>
        <position position="13"/>
    </location>
</feature>
<feature type="modified residue" description="Cysteine amide" evidence="2">
    <location>
        <position position="15"/>
    </location>
</feature>
<feature type="disulfide bond" evidence="1">
    <location>
        <begin position="1"/>
        <end position="15"/>
    </location>
</feature>
<feature type="disulfide bond" evidence="1">
    <location>
        <begin position="2"/>
        <end position="11"/>
    </location>
</feature>
<feature type="disulfide bond" evidence="1">
    <location>
        <begin position="7"/>
        <end position="14"/>
    </location>
</feature>
<feature type="unsure residue" description="I or L" evidence="4">
    <location>
        <position position="8"/>
    </location>
</feature>
<organism>
    <name type="scientific">Conus textile</name>
    <name type="common">Cloth-of-gold cone</name>
    <dbReference type="NCBI Taxonomy" id="6494"/>
    <lineage>
        <taxon>Eukaryota</taxon>
        <taxon>Metazoa</taxon>
        <taxon>Spiralia</taxon>
        <taxon>Lophotrochozoa</taxon>
        <taxon>Mollusca</taxon>
        <taxon>Gastropoda</taxon>
        <taxon>Caenogastropoda</taxon>
        <taxon>Neogastropoda</taxon>
        <taxon>Conoidea</taxon>
        <taxon>Conidae</taxon>
        <taxon>Conus</taxon>
        <taxon>Cylinder</taxon>
    </lineage>
</organism>